<organism>
    <name type="scientific">Homo sapiens</name>
    <name type="common">Human</name>
    <dbReference type="NCBI Taxonomy" id="9606"/>
    <lineage>
        <taxon>Eukaryota</taxon>
        <taxon>Metazoa</taxon>
        <taxon>Chordata</taxon>
        <taxon>Craniata</taxon>
        <taxon>Vertebrata</taxon>
        <taxon>Euteleostomi</taxon>
        <taxon>Mammalia</taxon>
        <taxon>Eutheria</taxon>
        <taxon>Euarchontoglires</taxon>
        <taxon>Primates</taxon>
        <taxon>Haplorrhini</taxon>
        <taxon>Catarrhini</taxon>
        <taxon>Hominidae</taxon>
        <taxon>Homo</taxon>
    </lineage>
</organism>
<proteinExistence type="evidence at protein level"/>
<evidence type="ECO:0000269" key="1">
    <source>
    </source>
</evidence>
<evidence type="ECO:0000269" key="2">
    <source>
    </source>
</evidence>
<evidence type="ECO:0000269" key="3">
    <source>
    </source>
</evidence>
<evidence type="ECO:0000269" key="4">
    <source>
    </source>
</evidence>
<evidence type="ECO:0000303" key="5">
    <source>
    </source>
</evidence>
<evidence type="ECO:0000305" key="6"/>
<evidence type="ECO:0000305" key="7">
    <source>
    </source>
</evidence>
<evidence type="ECO:0007744" key="8">
    <source>
        <dbReference type="PDB" id="2P0E"/>
    </source>
</evidence>
<evidence type="ECO:0007744" key="9">
    <source>
        <dbReference type="PDB" id="2QG6"/>
    </source>
</evidence>
<evidence type="ECO:0007744" key="10">
    <source>
        <dbReference type="PDB" id="2QL6"/>
    </source>
</evidence>
<evidence type="ECO:0007744" key="11">
    <source>
        <dbReference type="PDB" id="2QSY"/>
    </source>
</evidence>
<evidence type="ECO:0007744" key="12">
    <source>
        <dbReference type="PDB" id="2QSZ"/>
    </source>
</evidence>
<evidence type="ECO:0007744" key="13">
    <source>
        <dbReference type="PDB" id="2QT0"/>
    </source>
</evidence>
<evidence type="ECO:0007744" key="14">
    <source>
        <dbReference type="PDB" id="2QT1"/>
    </source>
</evidence>
<evidence type="ECO:0007829" key="15">
    <source>
        <dbReference type="PDB" id="2QT1"/>
    </source>
</evidence>
<protein>
    <recommendedName>
        <fullName>Nicotinamide riboside kinase 1</fullName>
        <shortName>NRK 1</shortName>
        <shortName>NmR-K 1</shortName>
        <ecNumber evidence="3 4">2.7.1.22</ecNumber>
    </recommendedName>
    <alternativeName>
        <fullName>Nicotinic acid riboside kinase 1</fullName>
        <ecNumber evidence="3 4">2.7.1.173</ecNumber>
    </alternativeName>
    <alternativeName>
        <fullName>Ribosylnicotinamide kinase 1</fullName>
        <shortName>RNK 1</shortName>
    </alternativeName>
    <alternativeName>
        <fullName>Ribosylnicotinic acid kinase 1</fullName>
    </alternativeName>
</protein>
<accession>Q9NWW6</accession>
<accession>Q5W124</accession>
<accession>Q8N430</accession>
<comment type="function">
    <text evidence="1">Catalyzes the phosphorylation of nicotinamide riboside (NR) and nicotinic acid riboside (NaR) to form nicotinamide mononucleotide (NMN) and nicotinic acid mononucleotide (NaMN). The enzyme also phosphorylates the antitumor drugs tiazofurin and 3-deazaguanosine.</text>
</comment>
<comment type="catalytic activity">
    <reaction evidence="3 4">
        <text>beta-nicotinamide D-riboside + ATP = beta-nicotinamide D-ribonucleotide + ADP + H(+)</text>
        <dbReference type="Rhea" id="RHEA:14017"/>
        <dbReference type="ChEBI" id="CHEBI:14649"/>
        <dbReference type="ChEBI" id="CHEBI:15378"/>
        <dbReference type="ChEBI" id="CHEBI:15927"/>
        <dbReference type="ChEBI" id="CHEBI:30616"/>
        <dbReference type="ChEBI" id="CHEBI:456216"/>
        <dbReference type="EC" id="2.7.1.22"/>
    </reaction>
</comment>
<comment type="catalytic activity">
    <reaction evidence="3 4">
        <text>beta-D-ribosylnicotinate + ATP = nicotinate beta-D-ribonucleotide + ADP + H(+)</text>
        <dbReference type="Rhea" id="RHEA:25568"/>
        <dbReference type="ChEBI" id="CHEBI:15378"/>
        <dbReference type="ChEBI" id="CHEBI:30616"/>
        <dbReference type="ChEBI" id="CHEBI:57502"/>
        <dbReference type="ChEBI" id="CHEBI:58527"/>
        <dbReference type="ChEBI" id="CHEBI:456216"/>
        <dbReference type="EC" id="2.7.1.173"/>
    </reaction>
</comment>
<comment type="biophysicochemical properties">
    <kinetics>
        <KM evidence="3 4">0.088 mM for nicotinamide riboside (with ATP as cosubstrate)</KM>
        <KM evidence="3 4">0.068 mM for nicotinamide riboside (with GTP as cosubstrate)</KM>
        <KM evidence="3 4">0.27 mM for tiazofurin (with ATP as cosubstrate)</KM>
        <KM evidence="3 4">0.051 mM for nicotinic acid riboside (with ATP as cosubstrate)</KM>
        <KM evidence="3 4">17 mM for uridine (with ATP as cosubstrate)</KM>
    </kinetics>
    <phDependence>
        <text evidence="3 4">Optimum pH is 6.5-9.</text>
    </phDependence>
</comment>
<comment type="pathway">
    <text evidence="7">Cofactor biosynthesis; NAD(+) biosynthesis.</text>
</comment>
<comment type="subunit">
    <text evidence="4">Monomer.</text>
</comment>
<comment type="interaction">
    <interactant intactId="EBI-10315485">
        <id>Q9NWW6</id>
    </interactant>
    <interactant intactId="EBI-6509505">
        <id>Q0VD86</id>
        <label>INCA1</label>
    </interactant>
    <organismsDiffer>false</organismsDiffer>
    <experiments>3</experiments>
</comment>
<comment type="interaction">
    <interactant intactId="EBI-10315485">
        <id>Q9NWW6</id>
    </interactant>
    <interactant intactId="EBI-11976683">
        <id>Q4G0X4</id>
        <label>KCTD21</label>
    </interactant>
    <organismsDiffer>false</organismsDiffer>
    <experiments>3</experiments>
</comment>
<comment type="interaction">
    <interactant intactId="EBI-10315485">
        <id>Q9NWW6</id>
    </interactant>
    <interactant intactId="EBI-10829018">
        <id>Q04864-2</id>
        <label>REL</label>
    </interactant>
    <organismsDiffer>false</organismsDiffer>
    <experiments>3</experiments>
</comment>
<comment type="interaction">
    <interactant intactId="EBI-10315485">
        <id>Q9NWW6</id>
    </interactant>
    <interactant intactId="EBI-529518">
        <id>Q86VP1</id>
        <label>TAX1BP1</label>
    </interactant>
    <organismsDiffer>false</organismsDiffer>
    <experiments>6</experiments>
</comment>
<comment type="alternative products">
    <event type="alternative splicing"/>
    <isoform>
        <id>Q9NWW6-1</id>
        <name>1</name>
        <sequence type="displayed"/>
    </isoform>
    <isoform>
        <id>Q9NWW6-2</id>
        <name>2</name>
        <sequence type="described" ref="VSP_012676"/>
    </isoform>
</comment>
<comment type="similarity">
    <text evidence="6">Belongs to the uridine kinase family. NRK subfamily.</text>
</comment>
<keyword id="KW-0002">3D-structure</keyword>
<keyword id="KW-0025">Alternative splicing</keyword>
<keyword id="KW-0067">ATP-binding</keyword>
<keyword id="KW-0418">Kinase</keyword>
<keyword id="KW-0460">Magnesium</keyword>
<keyword id="KW-0479">Metal-binding</keyword>
<keyword id="KW-0547">Nucleotide-binding</keyword>
<keyword id="KW-1267">Proteomics identification</keyword>
<keyword id="KW-0662">Pyridine nucleotide biosynthesis</keyword>
<keyword id="KW-1185">Reference proteome</keyword>
<keyword id="KW-0808">Transferase</keyword>
<gene>
    <name type="primary">NMRK1</name>
    <name type="synonym">C9orf95</name>
    <name type="synonym">NRK1</name>
</gene>
<name>NRK1_HUMAN</name>
<dbReference type="EC" id="2.7.1.22" evidence="3 4"/>
<dbReference type="EC" id="2.7.1.173" evidence="3 4"/>
<dbReference type="EMBL" id="AY611480">
    <property type="protein sequence ID" value="AAT11928.1"/>
    <property type="molecule type" value="mRNA"/>
</dbReference>
<dbReference type="EMBL" id="AK000566">
    <property type="protein sequence ID" value="BAA91259.1"/>
    <property type="molecule type" value="mRNA"/>
</dbReference>
<dbReference type="EMBL" id="AL133548">
    <property type="status" value="NOT_ANNOTATED_CDS"/>
    <property type="molecule type" value="Genomic_DNA"/>
</dbReference>
<dbReference type="EMBL" id="CH471089">
    <property type="protein sequence ID" value="EAW62568.1"/>
    <property type="molecule type" value="Genomic_DNA"/>
</dbReference>
<dbReference type="EMBL" id="BC001366">
    <property type="protein sequence ID" value="AAH01366.1"/>
    <property type="molecule type" value="mRNA"/>
</dbReference>
<dbReference type="EMBL" id="BC036804">
    <property type="protein sequence ID" value="AAH36804.1"/>
    <property type="molecule type" value="mRNA"/>
</dbReference>
<dbReference type="CCDS" id="CCDS47981.1">
    <molecule id="Q9NWW6-2"/>
</dbReference>
<dbReference type="CCDS" id="CCDS6650.1">
    <molecule id="Q9NWW6-1"/>
</dbReference>
<dbReference type="RefSeq" id="NP_001121075.1">
    <molecule id="Q9NWW6-2"/>
    <property type="nucleotide sequence ID" value="NM_001127603.2"/>
</dbReference>
<dbReference type="RefSeq" id="NP_001317607.1">
    <property type="nucleotide sequence ID" value="NM_001330678.1"/>
</dbReference>
<dbReference type="RefSeq" id="NP_060351.1">
    <molecule id="Q9NWW6-1"/>
    <property type="nucleotide sequence ID" value="NM_017881.3"/>
</dbReference>
<dbReference type="RefSeq" id="XP_006717226.1">
    <molecule id="Q9NWW6-1"/>
    <property type="nucleotide sequence ID" value="XM_006717163.3"/>
</dbReference>
<dbReference type="RefSeq" id="XP_016870359.1">
    <molecule id="Q9NWW6-1"/>
    <property type="nucleotide sequence ID" value="XM_017014870.3"/>
</dbReference>
<dbReference type="RefSeq" id="XP_016870363.1">
    <molecule id="Q9NWW6-2"/>
    <property type="nucleotide sequence ID" value="XM_017014874.2"/>
</dbReference>
<dbReference type="RefSeq" id="XP_047279505.1">
    <molecule id="Q9NWW6-1"/>
    <property type="nucleotide sequence ID" value="XM_047423549.1"/>
</dbReference>
<dbReference type="RefSeq" id="XP_054219169.1">
    <molecule id="Q9NWW6-1"/>
    <property type="nucleotide sequence ID" value="XM_054363194.1"/>
</dbReference>
<dbReference type="RefSeq" id="XP_054219170.1">
    <molecule id="Q9NWW6-1"/>
    <property type="nucleotide sequence ID" value="XM_054363195.1"/>
</dbReference>
<dbReference type="RefSeq" id="XP_054219171.1">
    <molecule id="Q9NWW6-1"/>
    <property type="nucleotide sequence ID" value="XM_054363196.1"/>
</dbReference>
<dbReference type="RefSeq" id="XP_054219173.1">
    <molecule id="Q9NWW6-2"/>
    <property type="nucleotide sequence ID" value="XM_054363198.1"/>
</dbReference>
<dbReference type="PDB" id="2P0E">
    <property type="method" value="X-ray"/>
    <property type="resolution" value="1.80 A"/>
    <property type="chains" value="A=2-189"/>
</dbReference>
<dbReference type="PDB" id="2QG6">
    <property type="method" value="X-ray"/>
    <property type="resolution" value="1.50 A"/>
    <property type="chains" value="A=1-199"/>
</dbReference>
<dbReference type="PDB" id="2QL6">
    <property type="method" value="X-ray"/>
    <property type="resolution" value="2.70 A"/>
    <property type="chains" value="A/B/C/D/E/F/G/H/I/J/K/L/M/N/O/P=1-199"/>
</dbReference>
<dbReference type="PDB" id="2QSY">
    <property type="method" value="X-ray"/>
    <property type="resolution" value="1.95 A"/>
    <property type="chains" value="A=2-189"/>
</dbReference>
<dbReference type="PDB" id="2QSZ">
    <property type="method" value="X-ray"/>
    <property type="resolution" value="1.90 A"/>
    <property type="chains" value="A=2-189"/>
</dbReference>
<dbReference type="PDB" id="2QT0">
    <property type="method" value="X-ray"/>
    <property type="resolution" value="1.92 A"/>
    <property type="chains" value="A=2-189"/>
</dbReference>
<dbReference type="PDB" id="2QT1">
    <property type="method" value="X-ray"/>
    <property type="resolution" value="1.32 A"/>
    <property type="chains" value="A=2-189"/>
</dbReference>
<dbReference type="PDBsum" id="2P0E"/>
<dbReference type="PDBsum" id="2QG6"/>
<dbReference type="PDBsum" id="2QL6"/>
<dbReference type="PDBsum" id="2QSY"/>
<dbReference type="PDBsum" id="2QSZ"/>
<dbReference type="PDBsum" id="2QT0"/>
<dbReference type="PDBsum" id="2QT1"/>
<dbReference type="SMR" id="Q9NWW6"/>
<dbReference type="BioGRID" id="120317">
    <property type="interactions" value="7"/>
</dbReference>
<dbReference type="FunCoup" id="Q9NWW6">
    <property type="interactions" value="528"/>
</dbReference>
<dbReference type="IntAct" id="Q9NWW6">
    <property type="interactions" value="4"/>
</dbReference>
<dbReference type="STRING" id="9606.ENSP00000366007"/>
<dbReference type="iPTMnet" id="Q9NWW6"/>
<dbReference type="PhosphoSitePlus" id="Q9NWW6"/>
<dbReference type="BioMuta" id="NMRK1"/>
<dbReference type="DMDM" id="50401180"/>
<dbReference type="jPOST" id="Q9NWW6"/>
<dbReference type="MassIVE" id="Q9NWW6"/>
<dbReference type="PaxDb" id="9606-ENSP00000354387"/>
<dbReference type="PeptideAtlas" id="Q9NWW6"/>
<dbReference type="ProteomicsDB" id="82992">
    <molecule id="Q9NWW6-1"/>
</dbReference>
<dbReference type="ProteomicsDB" id="82993">
    <molecule id="Q9NWW6-2"/>
</dbReference>
<dbReference type="Pumba" id="Q9NWW6"/>
<dbReference type="Antibodypedia" id="27143">
    <property type="antibodies" value="181 antibodies from 22 providers"/>
</dbReference>
<dbReference type="DNASU" id="54981"/>
<dbReference type="Ensembl" id="ENST00000361092.9">
    <molecule id="Q9NWW6-1"/>
    <property type="protein sequence ID" value="ENSP00000354387.4"/>
    <property type="gene ID" value="ENSG00000106733.21"/>
</dbReference>
<dbReference type="Ensembl" id="ENST00000376808.8">
    <molecule id="Q9NWW6-2"/>
    <property type="protein sequence ID" value="ENSP00000366004.4"/>
    <property type="gene ID" value="ENSG00000106733.21"/>
</dbReference>
<dbReference type="GeneID" id="54981"/>
<dbReference type="KEGG" id="hsa:54981"/>
<dbReference type="MANE-Select" id="ENST00000361092.9">
    <property type="protein sequence ID" value="ENSP00000354387.4"/>
    <property type="RefSeq nucleotide sequence ID" value="NM_017881.3"/>
    <property type="RefSeq protein sequence ID" value="NP_060351.1"/>
</dbReference>
<dbReference type="UCSC" id="uc004ajr.5">
    <molecule id="Q9NWW6-1"/>
    <property type="organism name" value="human"/>
</dbReference>
<dbReference type="AGR" id="HGNC:26057"/>
<dbReference type="CTD" id="54981"/>
<dbReference type="DisGeNET" id="54981"/>
<dbReference type="GeneCards" id="NMRK1"/>
<dbReference type="HGNC" id="HGNC:26057">
    <property type="gene designation" value="NMRK1"/>
</dbReference>
<dbReference type="HPA" id="ENSG00000106733">
    <property type="expression patterns" value="Low tissue specificity"/>
</dbReference>
<dbReference type="MIM" id="608704">
    <property type="type" value="gene"/>
</dbReference>
<dbReference type="neXtProt" id="NX_Q9NWW6"/>
<dbReference type="OpenTargets" id="ENSG00000106733"/>
<dbReference type="PharmGKB" id="PA134946592"/>
<dbReference type="VEuPathDB" id="HostDB:ENSG00000106733"/>
<dbReference type="eggNOG" id="KOG3308">
    <property type="taxonomic scope" value="Eukaryota"/>
</dbReference>
<dbReference type="GeneTree" id="ENSGT00940000159384"/>
<dbReference type="HOGENOM" id="CLU_058668_0_0_1"/>
<dbReference type="InParanoid" id="Q9NWW6"/>
<dbReference type="OMA" id="VWPEYLK"/>
<dbReference type="OrthoDB" id="10041966at2759"/>
<dbReference type="PAN-GO" id="Q9NWW6">
    <property type="GO annotations" value="2 GO annotations based on evolutionary models"/>
</dbReference>
<dbReference type="PhylomeDB" id="Q9NWW6"/>
<dbReference type="TreeFam" id="TF105395"/>
<dbReference type="BRENDA" id="2.7.1.173">
    <property type="organism ID" value="2681"/>
</dbReference>
<dbReference type="BRENDA" id="2.7.1.22">
    <property type="organism ID" value="2681"/>
</dbReference>
<dbReference type="PathwayCommons" id="Q9NWW6"/>
<dbReference type="Reactome" id="R-HSA-196807">
    <property type="pathway name" value="Nicotinate metabolism"/>
</dbReference>
<dbReference type="SignaLink" id="Q9NWW6"/>
<dbReference type="UniPathway" id="UPA00253"/>
<dbReference type="BioGRID-ORCS" id="54981">
    <property type="hits" value="10 hits in 1151 CRISPR screens"/>
</dbReference>
<dbReference type="ChiTaRS" id="NMRK1">
    <property type="organism name" value="human"/>
</dbReference>
<dbReference type="EvolutionaryTrace" id="Q9NWW6"/>
<dbReference type="GenomeRNAi" id="54981"/>
<dbReference type="Pharos" id="Q9NWW6">
    <property type="development level" value="Tbio"/>
</dbReference>
<dbReference type="PRO" id="PR:Q9NWW6"/>
<dbReference type="Proteomes" id="UP000005640">
    <property type="component" value="Chromosome 9"/>
</dbReference>
<dbReference type="RNAct" id="Q9NWW6">
    <property type="molecule type" value="protein"/>
</dbReference>
<dbReference type="Bgee" id="ENSG00000106733">
    <property type="expression patterns" value="Expressed in cervix squamous epithelium and 201 other cell types or tissues"/>
</dbReference>
<dbReference type="ExpressionAtlas" id="Q9NWW6">
    <property type="expression patterns" value="baseline and differential"/>
</dbReference>
<dbReference type="GO" id="GO:0005737">
    <property type="term" value="C:cytoplasm"/>
    <property type="evidence" value="ECO:0000318"/>
    <property type="project" value="GO_Central"/>
</dbReference>
<dbReference type="GO" id="GO:0005829">
    <property type="term" value="C:cytosol"/>
    <property type="evidence" value="ECO:0000304"/>
    <property type="project" value="Reactome"/>
</dbReference>
<dbReference type="GO" id="GO:0005524">
    <property type="term" value="F:ATP binding"/>
    <property type="evidence" value="ECO:0007669"/>
    <property type="project" value="UniProtKB-KW"/>
</dbReference>
<dbReference type="GO" id="GO:0046872">
    <property type="term" value="F:metal ion binding"/>
    <property type="evidence" value="ECO:0007669"/>
    <property type="project" value="UniProtKB-KW"/>
</dbReference>
<dbReference type="GO" id="GO:0034317">
    <property type="term" value="F:nicotinate riboside kinase activity"/>
    <property type="evidence" value="ECO:0007669"/>
    <property type="project" value="UniProtKB-EC"/>
</dbReference>
<dbReference type="GO" id="GO:0050262">
    <property type="term" value="F:ribosylnicotinamide kinase activity"/>
    <property type="evidence" value="ECO:0000269"/>
    <property type="project" value="Reactome"/>
</dbReference>
<dbReference type="GO" id="GO:0061769">
    <property type="term" value="F:ribosylnicotinate kinase activity"/>
    <property type="evidence" value="ECO:0000269"/>
    <property type="project" value="Reactome"/>
</dbReference>
<dbReference type="GO" id="GO:0009435">
    <property type="term" value="P:NAD biosynthetic process"/>
    <property type="evidence" value="ECO:0007669"/>
    <property type="project" value="UniProtKB-UniPathway"/>
</dbReference>
<dbReference type="GO" id="GO:0019674">
    <property type="term" value="P:NAD metabolic process"/>
    <property type="evidence" value="ECO:0000304"/>
    <property type="project" value="Reactome"/>
</dbReference>
<dbReference type="CDD" id="cd02024">
    <property type="entry name" value="NRK1"/>
    <property type="match status" value="1"/>
</dbReference>
<dbReference type="FunFam" id="3.40.50.300:FF:000853">
    <property type="entry name" value="Nicotinamide riboside kinase 1"/>
    <property type="match status" value="1"/>
</dbReference>
<dbReference type="Gene3D" id="3.40.50.300">
    <property type="entry name" value="P-loop containing nucleotide triphosphate hydrolases"/>
    <property type="match status" value="1"/>
</dbReference>
<dbReference type="InterPro" id="IPR027417">
    <property type="entry name" value="P-loop_NTPase"/>
</dbReference>
<dbReference type="PANTHER" id="PTHR10285">
    <property type="entry name" value="URIDINE KINASE"/>
    <property type="match status" value="1"/>
</dbReference>
<dbReference type="Pfam" id="PF13238">
    <property type="entry name" value="AAA_18"/>
    <property type="match status" value="1"/>
</dbReference>
<dbReference type="PRINTS" id="PR00988">
    <property type="entry name" value="URIDINKINASE"/>
</dbReference>
<dbReference type="SUPFAM" id="SSF52540">
    <property type="entry name" value="P-loop containing nucleoside triphosphate hydrolases"/>
    <property type="match status" value="1"/>
</dbReference>
<feature type="chain" id="PRO_0000215891" description="Nicotinamide riboside kinase 1">
    <location>
        <begin position="1"/>
        <end position="199"/>
    </location>
</feature>
<feature type="active site" description="Proton acceptor" evidence="3 13">
    <location>
        <position position="36"/>
    </location>
</feature>
<feature type="binding site" evidence="2 3 8 9 10 11 12 13 14">
    <location>
        <begin position="10"/>
        <end position="18"/>
    </location>
    <ligand>
        <name>ATP</name>
        <dbReference type="ChEBI" id="CHEBI:30616"/>
    </ligand>
</feature>
<feature type="binding site" evidence="3 11">
    <location>
        <position position="17"/>
    </location>
    <ligand>
        <name>Mg(2+)</name>
        <dbReference type="ChEBI" id="CHEBI:18420"/>
    </ligand>
</feature>
<feature type="binding site" evidence="2 3 8 10 13 14">
    <location>
        <begin position="36"/>
        <end position="39"/>
    </location>
    <ligand>
        <name>substrate</name>
    </ligand>
</feature>
<feature type="binding site" evidence="3 13">
    <location>
        <position position="36"/>
    </location>
    <ligand>
        <name>Mg(2+)</name>
        <dbReference type="ChEBI" id="CHEBI:18420"/>
    </ligand>
</feature>
<feature type="binding site" evidence="2 3 8 10 13 14">
    <location>
        <begin position="55"/>
        <end position="56"/>
    </location>
    <ligand>
        <name>substrate</name>
    </ligand>
</feature>
<feature type="binding site" evidence="3 8">
    <location>
        <position position="128"/>
    </location>
    <ligand>
        <name>ATP</name>
        <dbReference type="ChEBI" id="CHEBI:30616"/>
    </ligand>
</feature>
<feature type="binding site" evidence="3 8 10 13 14">
    <location>
        <position position="129"/>
    </location>
    <ligand>
        <name>substrate</name>
    </ligand>
</feature>
<feature type="binding site" evidence="2 3 8 9 11 12 13 14">
    <location>
        <begin position="132"/>
        <end position="134"/>
    </location>
    <ligand>
        <name>ATP</name>
        <dbReference type="ChEBI" id="CHEBI:30616"/>
    </ligand>
</feature>
<feature type="binding site" evidence="2 3 8 10 13">
    <location>
        <begin position="134"/>
        <end position="135"/>
    </location>
    <ligand>
        <name>substrate</name>
    </ligand>
</feature>
<feature type="binding site" evidence="3 11 13">
    <location>
        <begin position="172"/>
        <end position="174"/>
    </location>
    <ligand>
        <name>ATP</name>
        <dbReference type="ChEBI" id="CHEBI:30616"/>
    </ligand>
</feature>
<feature type="splice variant" id="VSP_012676" description="In isoform 2." evidence="5">
    <original>KPLDTIWNRSYFLTIPYEECKRRRS</original>
    <variation>N</variation>
    <location>
        <begin position="106"/>
        <end position="130"/>
    </location>
</feature>
<feature type="mutagenesis site" description="Loss of activity." evidence="2">
    <original>K</original>
    <variation>A</variation>
    <location>
        <position position="16"/>
    </location>
</feature>
<feature type="mutagenesis site" description="Loss of activity." evidence="2 3">
    <original>D</original>
    <variation>A</variation>
    <location>
        <position position="36"/>
    </location>
</feature>
<feature type="mutagenesis site" description="Loss of activity." evidence="2">
    <original>D</original>
    <variation>A</variation>
    <location>
        <position position="56"/>
    </location>
</feature>
<feature type="mutagenesis site" description="Loss of activity." evidence="3">
    <original>E</original>
    <variation>A</variation>
    <location>
        <position position="98"/>
    </location>
</feature>
<feature type="mutagenesis site" description="Almost no effect." evidence="2">
    <original>D</original>
    <variation>A</variation>
    <location>
        <position position="138"/>
    </location>
</feature>
<feature type="strand" evidence="15">
    <location>
        <begin position="4"/>
        <end position="11"/>
    </location>
</feature>
<feature type="helix" evidence="15">
    <location>
        <begin position="16"/>
        <end position="24"/>
    </location>
</feature>
<feature type="strand" evidence="15">
    <location>
        <begin position="30"/>
        <end position="34"/>
    </location>
</feature>
<feature type="helix" evidence="15">
    <location>
        <begin position="35"/>
        <end position="38"/>
    </location>
</feature>
<feature type="helix" evidence="15">
    <location>
        <begin position="42"/>
        <end position="44"/>
    </location>
</feature>
<feature type="helix" evidence="15">
    <location>
        <begin position="58"/>
        <end position="60"/>
    </location>
</feature>
<feature type="helix" evidence="15">
    <location>
        <begin position="63"/>
        <end position="77"/>
    </location>
</feature>
<feature type="strand" evidence="15">
    <location>
        <begin position="94"/>
        <end position="98"/>
    </location>
</feature>
<feature type="helix" evidence="15">
    <location>
        <begin position="106"/>
        <end position="108"/>
    </location>
</feature>
<feature type="turn" evidence="15">
    <location>
        <begin position="109"/>
        <end position="111"/>
    </location>
</feature>
<feature type="strand" evidence="15">
    <location>
        <begin position="113"/>
        <end position="119"/>
    </location>
</feature>
<feature type="helix" evidence="15">
    <location>
        <begin position="122"/>
        <end position="131"/>
    </location>
</feature>
<feature type="helix" evidence="15">
    <location>
        <begin position="142"/>
        <end position="145"/>
    </location>
</feature>
<feature type="helix" evidence="15">
    <location>
        <begin position="147"/>
        <end position="157"/>
    </location>
</feature>
<feature type="helix" evidence="15">
    <location>
        <begin position="158"/>
        <end position="160"/>
    </location>
</feature>
<feature type="strand" evidence="15">
    <location>
        <begin position="166"/>
        <end position="169"/>
    </location>
</feature>
<feature type="helix" evidence="15">
    <location>
        <begin position="174"/>
        <end position="185"/>
    </location>
</feature>
<feature type="turn" evidence="15">
    <location>
        <begin position="186"/>
        <end position="188"/>
    </location>
</feature>
<reference key="1">
    <citation type="journal article" date="2004" name="Cell">
        <title>Discoveries of nicotinamide riboside as a nutrient and conserved NRK genes establish a Preiss-Handler independent route to NAD+ in fungi and humans.</title>
        <authorList>
            <person name="Bieganowski P."/>
            <person name="Brenner C."/>
        </authorList>
    </citation>
    <scope>NUCLEOTIDE SEQUENCE [MRNA] (ISOFORM 1)</scope>
    <scope>FUNCTION</scope>
    <scope>CATALYTIC ACTIVITY</scope>
</reference>
<reference key="2">
    <citation type="journal article" date="2004" name="Nat. Genet.">
        <title>Complete sequencing and characterization of 21,243 full-length human cDNAs.</title>
        <authorList>
            <person name="Ota T."/>
            <person name="Suzuki Y."/>
            <person name="Nishikawa T."/>
            <person name="Otsuki T."/>
            <person name="Sugiyama T."/>
            <person name="Irie R."/>
            <person name="Wakamatsu A."/>
            <person name="Hayashi K."/>
            <person name="Sato H."/>
            <person name="Nagai K."/>
            <person name="Kimura K."/>
            <person name="Makita H."/>
            <person name="Sekine M."/>
            <person name="Obayashi M."/>
            <person name="Nishi T."/>
            <person name="Shibahara T."/>
            <person name="Tanaka T."/>
            <person name="Ishii S."/>
            <person name="Yamamoto J."/>
            <person name="Saito K."/>
            <person name="Kawai Y."/>
            <person name="Isono Y."/>
            <person name="Nakamura Y."/>
            <person name="Nagahari K."/>
            <person name="Murakami K."/>
            <person name="Yasuda T."/>
            <person name="Iwayanagi T."/>
            <person name="Wagatsuma M."/>
            <person name="Shiratori A."/>
            <person name="Sudo H."/>
            <person name="Hosoiri T."/>
            <person name="Kaku Y."/>
            <person name="Kodaira H."/>
            <person name="Kondo H."/>
            <person name="Sugawara M."/>
            <person name="Takahashi M."/>
            <person name="Kanda K."/>
            <person name="Yokoi T."/>
            <person name="Furuya T."/>
            <person name="Kikkawa E."/>
            <person name="Omura Y."/>
            <person name="Abe K."/>
            <person name="Kamihara K."/>
            <person name="Katsuta N."/>
            <person name="Sato K."/>
            <person name="Tanikawa M."/>
            <person name="Yamazaki M."/>
            <person name="Ninomiya K."/>
            <person name="Ishibashi T."/>
            <person name="Yamashita H."/>
            <person name="Murakawa K."/>
            <person name="Fujimori K."/>
            <person name="Tanai H."/>
            <person name="Kimata M."/>
            <person name="Watanabe M."/>
            <person name="Hiraoka S."/>
            <person name="Chiba Y."/>
            <person name="Ishida S."/>
            <person name="Ono Y."/>
            <person name="Takiguchi S."/>
            <person name="Watanabe S."/>
            <person name="Yosida M."/>
            <person name="Hotuta T."/>
            <person name="Kusano J."/>
            <person name="Kanehori K."/>
            <person name="Takahashi-Fujii A."/>
            <person name="Hara H."/>
            <person name="Tanase T.-O."/>
            <person name="Nomura Y."/>
            <person name="Togiya S."/>
            <person name="Komai F."/>
            <person name="Hara R."/>
            <person name="Takeuchi K."/>
            <person name="Arita M."/>
            <person name="Imose N."/>
            <person name="Musashino K."/>
            <person name="Yuuki H."/>
            <person name="Oshima A."/>
            <person name="Sasaki N."/>
            <person name="Aotsuka S."/>
            <person name="Yoshikawa Y."/>
            <person name="Matsunawa H."/>
            <person name="Ichihara T."/>
            <person name="Shiohata N."/>
            <person name="Sano S."/>
            <person name="Moriya S."/>
            <person name="Momiyama H."/>
            <person name="Satoh N."/>
            <person name="Takami S."/>
            <person name="Terashima Y."/>
            <person name="Suzuki O."/>
            <person name="Nakagawa S."/>
            <person name="Senoh A."/>
            <person name="Mizoguchi H."/>
            <person name="Goto Y."/>
            <person name="Shimizu F."/>
            <person name="Wakebe H."/>
            <person name="Hishigaki H."/>
            <person name="Watanabe T."/>
            <person name="Sugiyama A."/>
            <person name="Takemoto M."/>
            <person name="Kawakami B."/>
            <person name="Yamazaki M."/>
            <person name="Watanabe K."/>
            <person name="Kumagai A."/>
            <person name="Itakura S."/>
            <person name="Fukuzumi Y."/>
            <person name="Fujimori Y."/>
            <person name="Komiyama M."/>
            <person name="Tashiro H."/>
            <person name="Tanigami A."/>
            <person name="Fujiwara T."/>
            <person name="Ono T."/>
            <person name="Yamada K."/>
            <person name="Fujii Y."/>
            <person name="Ozaki K."/>
            <person name="Hirao M."/>
            <person name="Ohmori Y."/>
            <person name="Kawabata A."/>
            <person name="Hikiji T."/>
            <person name="Kobatake N."/>
            <person name="Inagaki H."/>
            <person name="Ikema Y."/>
            <person name="Okamoto S."/>
            <person name="Okitani R."/>
            <person name="Kawakami T."/>
            <person name="Noguchi S."/>
            <person name="Itoh T."/>
            <person name="Shigeta K."/>
            <person name="Senba T."/>
            <person name="Matsumura K."/>
            <person name="Nakajima Y."/>
            <person name="Mizuno T."/>
            <person name="Morinaga M."/>
            <person name="Sasaki M."/>
            <person name="Togashi T."/>
            <person name="Oyama M."/>
            <person name="Hata H."/>
            <person name="Watanabe M."/>
            <person name="Komatsu T."/>
            <person name="Mizushima-Sugano J."/>
            <person name="Satoh T."/>
            <person name="Shirai Y."/>
            <person name="Takahashi Y."/>
            <person name="Nakagawa K."/>
            <person name="Okumura K."/>
            <person name="Nagase T."/>
            <person name="Nomura N."/>
            <person name="Kikuchi H."/>
            <person name="Masuho Y."/>
            <person name="Yamashita R."/>
            <person name="Nakai K."/>
            <person name="Yada T."/>
            <person name="Nakamura Y."/>
            <person name="Ohara O."/>
            <person name="Isogai T."/>
            <person name="Sugano S."/>
        </authorList>
    </citation>
    <scope>NUCLEOTIDE SEQUENCE [LARGE SCALE MRNA] (ISOFORM 1)</scope>
</reference>
<reference key="3">
    <citation type="journal article" date="2004" name="Nature">
        <title>DNA sequence and analysis of human chromosome 9.</title>
        <authorList>
            <person name="Humphray S.J."/>
            <person name="Oliver K."/>
            <person name="Hunt A.R."/>
            <person name="Plumb R.W."/>
            <person name="Loveland J.E."/>
            <person name="Howe K.L."/>
            <person name="Andrews T.D."/>
            <person name="Searle S."/>
            <person name="Hunt S.E."/>
            <person name="Scott C.E."/>
            <person name="Jones M.C."/>
            <person name="Ainscough R."/>
            <person name="Almeida J.P."/>
            <person name="Ambrose K.D."/>
            <person name="Ashwell R.I.S."/>
            <person name="Babbage A.K."/>
            <person name="Babbage S."/>
            <person name="Bagguley C.L."/>
            <person name="Bailey J."/>
            <person name="Banerjee R."/>
            <person name="Barker D.J."/>
            <person name="Barlow K.F."/>
            <person name="Bates K."/>
            <person name="Beasley H."/>
            <person name="Beasley O."/>
            <person name="Bird C.P."/>
            <person name="Bray-Allen S."/>
            <person name="Brown A.J."/>
            <person name="Brown J.Y."/>
            <person name="Burford D."/>
            <person name="Burrill W."/>
            <person name="Burton J."/>
            <person name="Carder C."/>
            <person name="Carter N.P."/>
            <person name="Chapman J.C."/>
            <person name="Chen Y."/>
            <person name="Clarke G."/>
            <person name="Clark S.Y."/>
            <person name="Clee C.M."/>
            <person name="Clegg S."/>
            <person name="Collier R.E."/>
            <person name="Corby N."/>
            <person name="Crosier M."/>
            <person name="Cummings A.T."/>
            <person name="Davies J."/>
            <person name="Dhami P."/>
            <person name="Dunn M."/>
            <person name="Dutta I."/>
            <person name="Dyer L.W."/>
            <person name="Earthrowl M.E."/>
            <person name="Faulkner L."/>
            <person name="Fleming C.J."/>
            <person name="Frankish A."/>
            <person name="Frankland J.A."/>
            <person name="French L."/>
            <person name="Fricker D.G."/>
            <person name="Garner P."/>
            <person name="Garnett J."/>
            <person name="Ghori J."/>
            <person name="Gilbert J.G.R."/>
            <person name="Glison C."/>
            <person name="Grafham D.V."/>
            <person name="Gribble S."/>
            <person name="Griffiths C."/>
            <person name="Griffiths-Jones S."/>
            <person name="Grocock R."/>
            <person name="Guy J."/>
            <person name="Hall R.E."/>
            <person name="Hammond S."/>
            <person name="Harley J.L."/>
            <person name="Harrison E.S.I."/>
            <person name="Hart E.A."/>
            <person name="Heath P.D."/>
            <person name="Henderson C.D."/>
            <person name="Hopkins B.L."/>
            <person name="Howard P.J."/>
            <person name="Howden P.J."/>
            <person name="Huckle E."/>
            <person name="Johnson C."/>
            <person name="Johnson D."/>
            <person name="Joy A.A."/>
            <person name="Kay M."/>
            <person name="Keenan S."/>
            <person name="Kershaw J.K."/>
            <person name="Kimberley A.M."/>
            <person name="King A."/>
            <person name="Knights A."/>
            <person name="Laird G.K."/>
            <person name="Langford C."/>
            <person name="Lawlor S."/>
            <person name="Leongamornlert D.A."/>
            <person name="Leversha M."/>
            <person name="Lloyd C."/>
            <person name="Lloyd D.M."/>
            <person name="Lovell J."/>
            <person name="Martin S."/>
            <person name="Mashreghi-Mohammadi M."/>
            <person name="Matthews L."/>
            <person name="McLaren S."/>
            <person name="McLay K.E."/>
            <person name="McMurray A."/>
            <person name="Milne S."/>
            <person name="Nickerson T."/>
            <person name="Nisbett J."/>
            <person name="Nordsiek G."/>
            <person name="Pearce A.V."/>
            <person name="Peck A.I."/>
            <person name="Porter K.M."/>
            <person name="Pandian R."/>
            <person name="Pelan S."/>
            <person name="Phillimore B."/>
            <person name="Povey S."/>
            <person name="Ramsey Y."/>
            <person name="Rand V."/>
            <person name="Scharfe M."/>
            <person name="Sehra H.K."/>
            <person name="Shownkeen R."/>
            <person name="Sims S.K."/>
            <person name="Skuce C.D."/>
            <person name="Smith M."/>
            <person name="Steward C.A."/>
            <person name="Swarbreck D."/>
            <person name="Sycamore N."/>
            <person name="Tester J."/>
            <person name="Thorpe A."/>
            <person name="Tracey A."/>
            <person name="Tromans A."/>
            <person name="Thomas D.W."/>
            <person name="Wall M."/>
            <person name="Wallis J.M."/>
            <person name="West A.P."/>
            <person name="Whitehead S.L."/>
            <person name="Willey D.L."/>
            <person name="Williams S.A."/>
            <person name="Wilming L."/>
            <person name="Wray P.W."/>
            <person name="Young L."/>
            <person name="Ashurst J.L."/>
            <person name="Coulson A."/>
            <person name="Blocker H."/>
            <person name="Durbin R.M."/>
            <person name="Sulston J.E."/>
            <person name="Hubbard T."/>
            <person name="Jackson M.J."/>
            <person name="Bentley D.R."/>
            <person name="Beck S."/>
            <person name="Rogers J."/>
            <person name="Dunham I."/>
        </authorList>
    </citation>
    <scope>NUCLEOTIDE SEQUENCE [LARGE SCALE GENOMIC DNA]</scope>
</reference>
<reference key="4">
    <citation type="submission" date="2005-07" db="EMBL/GenBank/DDBJ databases">
        <authorList>
            <person name="Mural R.J."/>
            <person name="Istrail S."/>
            <person name="Sutton G.G."/>
            <person name="Florea L."/>
            <person name="Halpern A.L."/>
            <person name="Mobarry C.M."/>
            <person name="Lippert R."/>
            <person name="Walenz B."/>
            <person name="Shatkay H."/>
            <person name="Dew I."/>
            <person name="Miller J.R."/>
            <person name="Flanigan M.J."/>
            <person name="Edwards N.J."/>
            <person name="Bolanos R."/>
            <person name="Fasulo D."/>
            <person name="Halldorsson B.V."/>
            <person name="Hannenhalli S."/>
            <person name="Turner R."/>
            <person name="Yooseph S."/>
            <person name="Lu F."/>
            <person name="Nusskern D.R."/>
            <person name="Shue B.C."/>
            <person name="Zheng X.H."/>
            <person name="Zhong F."/>
            <person name="Delcher A.L."/>
            <person name="Huson D.H."/>
            <person name="Kravitz S.A."/>
            <person name="Mouchard L."/>
            <person name="Reinert K."/>
            <person name="Remington K.A."/>
            <person name="Clark A.G."/>
            <person name="Waterman M.S."/>
            <person name="Eichler E.E."/>
            <person name="Adams M.D."/>
            <person name="Hunkapiller M.W."/>
            <person name="Myers E.W."/>
            <person name="Venter J.C."/>
        </authorList>
    </citation>
    <scope>NUCLEOTIDE SEQUENCE [LARGE SCALE GENOMIC DNA]</scope>
</reference>
<reference key="5">
    <citation type="journal article" date="2004" name="Genome Res.">
        <title>The status, quality, and expansion of the NIH full-length cDNA project: the Mammalian Gene Collection (MGC).</title>
        <authorList>
            <consortium name="The MGC Project Team"/>
        </authorList>
    </citation>
    <scope>NUCLEOTIDE SEQUENCE [LARGE SCALE MRNA] (ISOFORMS 1 AND 2)</scope>
    <source>
        <tissue>Colon</tissue>
        <tissue>Hippocampus</tissue>
    </source>
</reference>
<reference key="6">
    <citation type="journal article" date="1996" name="Arch. Biochem. Biophys.">
        <title>Purification and properties of a human nicotinamide ribonucleoside kinase.</title>
        <authorList>
            <person name="Sasiak K."/>
            <person name="Saunders P.P."/>
        </authorList>
    </citation>
    <scope>CATALYTIC ACTIVITY</scope>
    <scope>BIOPHYSICOCHEMICAL PROPERTIES</scope>
    <scope>SUBUNIT</scope>
    <source>
        <tissue>Placenta</tissue>
    </source>
</reference>
<reference key="7">
    <citation type="journal article" date="2014" name="J. Proteomics">
        <title>An enzyme assisted RP-RPLC approach for in-depth analysis of human liver phosphoproteome.</title>
        <authorList>
            <person name="Bian Y."/>
            <person name="Song C."/>
            <person name="Cheng K."/>
            <person name="Dong M."/>
            <person name="Wang F."/>
            <person name="Huang J."/>
            <person name="Sun D."/>
            <person name="Wang L."/>
            <person name="Ye M."/>
            <person name="Zou H."/>
        </authorList>
    </citation>
    <scope>IDENTIFICATION BY MASS SPECTROMETRY [LARGE SCALE ANALYSIS]</scope>
    <source>
        <tissue>Liver</tissue>
    </source>
</reference>
<reference key="8">
    <citation type="journal article" date="2007" name="PLoS Biol.">
        <title>Nicotinamide riboside kinase structures reveal new pathways to NAD+.</title>
        <authorList>
            <person name="Tempel W."/>
            <person name="Rabeh W.M."/>
            <person name="Bogan K.L."/>
            <person name="Belenky P."/>
            <person name="Wojcik M."/>
            <person name="Seidle H.F."/>
            <person name="Nedyalkova L."/>
            <person name="Yang T."/>
            <person name="Sauve A.A."/>
            <person name="Park H.-W."/>
            <person name="Brenner C."/>
        </authorList>
    </citation>
    <scope>X-RAY CRYSTALLOGRAPHY (1.32 ANGSTROMS) OF 2-189 IN COMPLEXES WITH ATP AND SUBSTRATES</scope>
    <scope>SUBSTRATE SPECIFICITY</scope>
    <scope>BIOPHYSICOCHEMICAL PROPERTIES</scope>
    <scope>MUTAGENESIS OF ASP-36 AND GLU-98</scope>
</reference>
<reference key="9">
    <citation type="journal article" date="2007" name="Structure">
        <title>Crystal structure of human nicotinamide riboside kinase.</title>
        <authorList>
            <person name="Khan J.A."/>
            <person name="Xiang S."/>
            <person name="Tong L."/>
        </authorList>
    </citation>
    <scope>X-RAY CRYSTALLOGRAPHY (1.5 ANGSTROMS) IN COMPLEXES WITH NUCLEOSIDE MONOPHOSPHATE; ADP AND TIAZOFURIN</scope>
    <scope>MUTAGENESIS OF LYS-16; ASP-36; ASP-56 AND ASP-138</scope>
</reference>
<sequence length="199" mass="23193">MKTFIIGISGVTNSGKTTLAKNLQKHLPNCSVISQDDFFKPESEIETDKNGFLQYDVLEALNMEKMMSAISCWMESARHSVVSTDQESAEEIPILIIEGFLLFNYKPLDTIWNRSYFLTIPYEECKRRRSTRVYQPPDSPGYFDGHVWPMYLKYRQEMQDITWEVVYLDGTKSEEDLFLQVYEDLIQELAKQKCLQVTA</sequence>